<dbReference type="EC" id="2.7.1.148" evidence="1"/>
<dbReference type="EMBL" id="AM260525">
    <property type="protein sequence ID" value="CAK01070.1"/>
    <property type="molecule type" value="Genomic_DNA"/>
</dbReference>
<dbReference type="SMR" id="A9IQK8"/>
<dbReference type="KEGG" id="btr:BT_0633"/>
<dbReference type="eggNOG" id="COG1947">
    <property type="taxonomic scope" value="Bacteria"/>
</dbReference>
<dbReference type="HOGENOM" id="CLU_053057_1_0_5"/>
<dbReference type="UniPathway" id="UPA00056">
    <property type="reaction ID" value="UER00094"/>
</dbReference>
<dbReference type="Proteomes" id="UP000001592">
    <property type="component" value="Chromosome"/>
</dbReference>
<dbReference type="GO" id="GO:0050515">
    <property type="term" value="F:4-(cytidine 5'-diphospho)-2-C-methyl-D-erythritol kinase activity"/>
    <property type="evidence" value="ECO:0007669"/>
    <property type="project" value="UniProtKB-UniRule"/>
</dbReference>
<dbReference type="GO" id="GO:0005524">
    <property type="term" value="F:ATP binding"/>
    <property type="evidence" value="ECO:0007669"/>
    <property type="project" value="UniProtKB-UniRule"/>
</dbReference>
<dbReference type="GO" id="GO:0019288">
    <property type="term" value="P:isopentenyl diphosphate biosynthetic process, methylerythritol 4-phosphate pathway"/>
    <property type="evidence" value="ECO:0007669"/>
    <property type="project" value="UniProtKB-UniRule"/>
</dbReference>
<dbReference type="GO" id="GO:0016114">
    <property type="term" value="P:terpenoid biosynthetic process"/>
    <property type="evidence" value="ECO:0007669"/>
    <property type="project" value="InterPro"/>
</dbReference>
<dbReference type="Gene3D" id="3.30.230.10">
    <property type="match status" value="1"/>
</dbReference>
<dbReference type="Gene3D" id="3.30.70.890">
    <property type="entry name" value="GHMP kinase, C-terminal domain"/>
    <property type="match status" value="1"/>
</dbReference>
<dbReference type="HAMAP" id="MF_00061">
    <property type="entry name" value="IspE"/>
    <property type="match status" value="1"/>
</dbReference>
<dbReference type="InterPro" id="IPR013750">
    <property type="entry name" value="GHMP_kinase_C_dom"/>
</dbReference>
<dbReference type="InterPro" id="IPR036554">
    <property type="entry name" value="GHMP_kinase_C_sf"/>
</dbReference>
<dbReference type="InterPro" id="IPR006204">
    <property type="entry name" value="GHMP_kinase_N_dom"/>
</dbReference>
<dbReference type="InterPro" id="IPR004424">
    <property type="entry name" value="IspE"/>
</dbReference>
<dbReference type="InterPro" id="IPR020568">
    <property type="entry name" value="Ribosomal_Su5_D2-typ_SF"/>
</dbReference>
<dbReference type="InterPro" id="IPR014721">
    <property type="entry name" value="Ribsml_uS5_D2-typ_fold_subgr"/>
</dbReference>
<dbReference type="NCBIfam" id="TIGR00154">
    <property type="entry name" value="ispE"/>
    <property type="match status" value="1"/>
</dbReference>
<dbReference type="NCBIfam" id="NF011202">
    <property type="entry name" value="PRK14608.1"/>
    <property type="match status" value="1"/>
</dbReference>
<dbReference type="PANTHER" id="PTHR43527">
    <property type="entry name" value="4-DIPHOSPHOCYTIDYL-2-C-METHYL-D-ERYTHRITOL KINASE, CHLOROPLASTIC"/>
    <property type="match status" value="1"/>
</dbReference>
<dbReference type="PANTHER" id="PTHR43527:SF2">
    <property type="entry name" value="4-DIPHOSPHOCYTIDYL-2-C-METHYL-D-ERYTHRITOL KINASE, CHLOROPLASTIC"/>
    <property type="match status" value="1"/>
</dbReference>
<dbReference type="Pfam" id="PF08544">
    <property type="entry name" value="GHMP_kinases_C"/>
    <property type="match status" value="1"/>
</dbReference>
<dbReference type="Pfam" id="PF00288">
    <property type="entry name" value="GHMP_kinases_N"/>
    <property type="match status" value="1"/>
</dbReference>
<dbReference type="PIRSF" id="PIRSF010376">
    <property type="entry name" value="IspE"/>
    <property type="match status" value="1"/>
</dbReference>
<dbReference type="SUPFAM" id="SSF55060">
    <property type="entry name" value="GHMP Kinase, C-terminal domain"/>
    <property type="match status" value="1"/>
</dbReference>
<dbReference type="SUPFAM" id="SSF54211">
    <property type="entry name" value="Ribosomal protein S5 domain 2-like"/>
    <property type="match status" value="1"/>
</dbReference>
<reference key="1">
    <citation type="journal article" date="2007" name="Nat. Genet.">
        <title>Genomic analysis of Bartonella identifies type IV secretion systems as host adaptability factors.</title>
        <authorList>
            <person name="Saenz H.L."/>
            <person name="Engel P."/>
            <person name="Stoeckli M.C."/>
            <person name="Lanz C."/>
            <person name="Raddatz G."/>
            <person name="Vayssier-Taussat M."/>
            <person name="Birtles R."/>
            <person name="Schuster S.C."/>
            <person name="Dehio C."/>
        </authorList>
    </citation>
    <scope>NUCLEOTIDE SEQUENCE [LARGE SCALE GENOMIC DNA]</scope>
    <source>
        <strain>CIP 105476 / IBS 506</strain>
    </source>
</reference>
<proteinExistence type="inferred from homology"/>
<sequence length="299" mass="33037">MYKFRSKDMSHVFTPIKLNLALHVVGQRADGYHLIESLVYFSLSGDYLHYEPCESDQFVLTGPFAKELISHPDNLVVRARDFMHKTFPEGAHPTFFRLVKTLPVASGIGGGSGDAAGVISILRQQWNLDCPFEKLAKMSLVLGADVPMCLFALEYHQPLLVKGIGQEIIQLKEACSLAIVLVNHGQEISTQAVFKALDKRHHPSLKIDPIALKSVDSLVEALQETRNDLFSPALKMAPQLTQVLSILDECGSLFSRMSGTGATCFGIFKNQQTAQQAALLIKSMHPNWFVKSIMTLGTI</sequence>
<gene>
    <name evidence="1" type="primary">ispE</name>
    <name type="ordered locus">BT_0633</name>
</gene>
<organism>
    <name type="scientific">Bartonella tribocorum (strain CIP 105476 / IBS 506)</name>
    <dbReference type="NCBI Taxonomy" id="382640"/>
    <lineage>
        <taxon>Bacteria</taxon>
        <taxon>Pseudomonadati</taxon>
        <taxon>Pseudomonadota</taxon>
        <taxon>Alphaproteobacteria</taxon>
        <taxon>Hyphomicrobiales</taxon>
        <taxon>Bartonellaceae</taxon>
        <taxon>Bartonella</taxon>
    </lineage>
</organism>
<accession>A9IQK8</accession>
<feature type="chain" id="PRO_0000335702" description="4-diphosphocytidyl-2-C-methyl-D-erythritol kinase">
    <location>
        <begin position="1"/>
        <end position="299"/>
    </location>
</feature>
<feature type="active site" evidence="1">
    <location>
        <position position="17"/>
    </location>
</feature>
<feature type="active site" evidence="1">
    <location>
        <position position="145"/>
    </location>
</feature>
<feature type="binding site" evidence="1">
    <location>
        <begin position="103"/>
        <end position="113"/>
    </location>
    <ligand>
        <name>ATP</name>
        <dbReference type="ChEBI" id="CHEBI:30616"/>
    </ligand>
</feature>
<keyword id="KW-0067">ATP-binding</keyword>
<keyword id="KW-0414">Isoprene biosynthesis</keyword>
<keyword id="KW-0418">Kinase</keyword>
<keyword id="KW-0547">Nucleotide-binding</keyword>
<keyword id="KW-0808">Transferase</keyword>
<evidence type="ECO:0000255" key="1">
    <source>
        <dbReference type="HAMAP-Rule" id="MF_00061"/>
    </source>
</evidence>
<protein>
    <recommendedName>
        <fullName evidence="1">4-diphosphocytidyl-2-C-methyl-D-erythritol kinase</fullName>
        <shortName evidence="1">CMK</shortName>
        <ecNumber evidence="1">2.7.1.148</ecNumber>
    </recommendedName>
    <alternativeName>
        <fullName evidence="1">4-(cytidine-5'-diphospho)-2-C-methyl-D-erythritol kinase</fullName>
    </alternativeName>
</protein>
<name>ISPE_BART1</name>
<comment type="function">
    <text evidence="1">Catalyzes the phosphorylation of the position 2 hydroxy group of 4-diphosphocytidyl-2C-methyl-D-erythritol.</text>
</comment>
<comment type="catalytic activity">
    <reaction evidence="1">
        <text>4-CDP-2-C-methyl-D-erythritol + ATP = 4-CDP-2-C-methyl-D-erythritol 2-phosphate + ADP + H(+)</text>
        <dbReference type="Rhea" id="RHEA:18437"/>
        <dbReference type="ChEBI" id="CHEBI:15378"/>
        <dbReference type="ChEBI" id="CHEBI:30616"/>
        <dbReference type="ChEBI" id="CHEBI:57823"/>
        <dbReference type="ChEBI" id="CHEBI:57919"/>
        <dbReference type="ChEBI" id="CHEBI:456216"/>
        <dbReference type="EC" id="2.7.1.148"/>
    </reaction>
</comment>
<comment type="pathway">
    <text evidence="1">Isoprenoid biosynthesis; isopentenyl diphosphate biosynthesis via DXP pathway; isopentenyl diphosphate from 1-deoxy-D-xylulose 5-phosphate: step 3/6.</text>
</comment>
<comment type="similarity">
    <text evidence="1">Belongs to the GHMP kinase family. IspE subfamily.</text>
</comment>